<name>GFA_XANAC</name>
<sequence>MTSVSIHPSVDGGVARGGAEGFQGGTLECHCASDKVTVEVSAQTAHNHACGCSKCWKPDGAKFSVVAVVPRDNVEVTAHQEKLKIVDESATIQRHACTGCGVHLYGRIENKDHAFYGLDFVHTELSKQQGWSAPGFAAFVSSIIETGTPPEQMDEVRARLTELGLPPYDCLSPALMDALSAHVARKKGLLH</sequence>
<comment type="function">
    <text evidence="1">Catalyzes the condensation of formaldehyde and glutathione to S-hydroxymethylglutathione.</text>
</comment>
<comment type="catalytic activity">
    <reaction evidence="1">
        <text>S-(hydroxymethyl)glutathione = glutathione + formaldehyde</text>
        <dbReference type="Rhea" id="RHEA:22488"/>
        <dbReference type="ChEBI" id="CHEBI:16842"/>
        <dbReference type="ChEBI" id="CHEBI:57925"/>
        <dbReference type="ChEBI" id="CHEBI:58758"/>
        <dbReference type="EC" id="4.4.1.22"/>
    </reaction>
</comment>
<comment type="cofactor">
    <cofactor evidence="1 2">
        <name>Zn(2+)</name>
        <dbReference type="ChEBI" id="CHEBI:29105"/>
    </cofactor>
    <text evidence="1 2">Binds 2 Zn(2+) ions per subunit.</text>
</comment>
<comment type="pathway">
    <text evidence="1">One-carbon metabolism; formaldehyde degradation; formate from formaldehyde (glutathione route): step 1/3.</text>
</comment>
<comment type="similarity">
    <text evidence="1">Belongs to the Gfa family.</text>
</comment>
<feature type="chain" id="PRO_0000220324" description="Glutathione-dependent formaldehyde-activating enzyme">
    <location>
        <begin position="1"/>
        <end position="191"/>
    </location>
</feature>
<feature type="domain" description="CENP-V/GFA" evidence="2">
    <location>
        <begin position="22"/>
        <end position="169"/>
    </location>
</feature>
<feature type="binding site" evidence="1 2">
    <location>
        <position position="29"/>
    </location>
    <ligand>
        <name>Zn(2+)</name>
        <dbReference type="ChEBI" id="CHEBI:29105"/>
        <label>1</label>
        <note>structural</note>
    </ligand>
</feature>
<feature type="binding site" evidence="1 2">
    <location>
        <position position="31"/>
    </location>
    <ligand>
        <name>Zn(2+)</name>
        <dbReference type="ChEBI" id="CHEBI:29105"/>
        <label>1</label>
        <note>structural</note>
    </ligand>
</feature>
<feature type="binding site" evidence="1 2">
    <location>
        <position position="50"/>
    </location>
    <ligand>
        <name>Zn(2+)</name>
        <dbReference type="ChEBI" id="CHEBI:29105"/>
        <label>2</label>
        <note>catalytic</note>
    </ligand>
</feature>
<feature type="binding site" evidence="1 2">
    <location>
        <position position="52"/>
    </location>
    <ligand>
        <name>Zn(2+)</name>
        <dbReference type="ChEBI" id="CHEBI:29105"/>
        <label>2</label>
        <note>catalytic</note>
    </ligand>
</feature>
<feature type="binding site" evidence="1 2">
    <location>
        <position position="55"/>
    </location>
    <ligand>
        <name>Zn(2+)</name>
        <dbReference type="ChEBI" id="CHEBI:29105"/>
        <label>2</label>
        <note>catalytic</note>
    </ligand>
</feature>
<feature type="binding site" evidence="1 2">
    <location>
        <position position="97"/>
    </location>
    <ligand>
        <name>Zn(2+)</name>
        <dbReference type="ChEBI" id="CHEBI:29105"/>
        <label>1</label>
        <note>structural</note>
    </ligand>
</feature>
<feature type="binding site" evidence="1 2">
    <location>
        <position position="100"/>
    </location>
    <ligand>
        <name>Zn(2+)</name>
        <dbReference type="ChEBI" id="CHEBI:29105"/>
        <label>1</label>
        <note>structural</note>
    </ligand>
</feature>
<accession>Q8PPF1</accession>
<gene>
    <name evidence="1" type="primary">gfa</name>
    <name type="ordered locus">XAC0735</name>
</gene>
<dbReference type="EC" id="4.4.1.22" evidence="1"/>
<dbReference type="EMBL" id="AE008923">
    <property type="protein sequence ID" value="AAM35624.1"/>
    <property type="molecule type" value="Genomic_DNA"/>
</dbReference>
<dbReference type="RefSeq" id="WP_011050508.1">
    <property type="nucleotide sequence ID" value="NC_003919.1"/>
</dbReference>
<dbReference type="SMR" id="Q8PPF1"/>
<dbReference type="GeneID" id="66909932"/>
<dbReference type="KEGG" id="xac:XAC0735"/>
<dbReference type="eggNOG" id="COG3791">
    <property type="taxonomic scope" value="Bacteria"/>
</dbReference>
<dbReference type="HOGENOM" id="CLU_090716_0_0_6"/>
<dbReference type="UniPathway" id="UPA00562">
    <property type="reaction ID" value="UER00621"/>
</dbReference>
<dbReference type="Proteomes" id="UP000000576">
    <property type="component" value="Chromosome"/>
</dbReference>
<dbReference type="GO" id="GO:0051907">
    <property type="term" value="F:S-(hydroxymethyl)glutathione synthase activity"/>
    <property type="evidence" value="ECO:0007669"/>
    <property type="project" value="UniProtKB-UniRule"/>
</dbReference>
<dbReference type="GO" id="GO:0008270">
    <property type="term" value="F:zinc ion binding"/>
    <property type="evidence" value="ECO:0007669"/>
    <property type="project" value="UniProtKB-UniRule"/>
</dbReference>
<dbReference type="GO" id="GO:0046294">
    <property type="term" value="P:formaldehyde catabolic process"/>
    <property type="evidence" value="ECO:0007669"/>
    <property type="project" value="UniProtKB-UniRule"/>
</dbReference>
<dbReference type="Gene3D" id="3.90.1590.10">
    <property type="entry name" value="glutathione-dependent formaldehyde- activating enzyme (gfa)"/>
    <property type="match status" value="1"/>
</dbReference>
<dbReference type="HAMAP" id="MF_00723">
    <property type="entry name" value="Formald_GSH"/>
    <property type="match status" value="1"/>
</dbReference>
<dbReference type="InterPro" id="IPR006913">
    <property type="entry name" value="CENP-V/GFA"/>
</dbReference>
<dbReference type="InterPro" id="IPR014185">
    <property type="entry name" value="Formald_GSH"/>
</dbReference>
<dbReference type="InterPro" id="IPR011057">
    <property type="entry name" value="Mss4-like_sf"/>
</dbReference>
<dbReference type="NCBIfam" id="TIGR02820">
    <property type="entry name" value="formald_GSH"/>
    <property type="match status" value="1"/>
</dbReference>
<dbReference type="NCBIfam" id="NF003829">
    <property type="entry name" value="PRK05417.1"/>
    <property type="match status" value="1"/>
</dbReference>
<dbReference type="PANTHER" id="PTHR33337:SF40">
    <property type="entry name" value="CENP-V_GFA DOMAIN-CONTAINING PROTEIN-RELATED"/>
    <property type="match status" value="1"/>
</dbReference>
<dbReference type="PANTHER" id="PTHR33337">
    <property type="entry name" value="GFA DOMAIN-CONTAINING PROTEIN"/>
    <property type="match status" value="1"/>
</dbReference>
<dbReference type="Pfam" id="PF04828">
    <property type="entry name" value="GFA"/>
    <property type="match status" value="1"/>
</dbReference>
<dbReference type="PIRSF" id="PIRSF033318">
    <property type="entry name" value="Formald_GSH"/>
    <property type="match status" value="1"/>
</dbReference>
<dbReference type="SUPFAM" id="SSF51316">
    <property type="entry name" value="Mss4-like"/>
    <property type="match status" value="1"/>
</dbReference>
<dbReference type="PROSITE" id="PS51891">
    <property type="entry name" value="CENP_V_GFA"/>
    <property type="match status" value="1"/>
</dbReference>
<keyword id="KW-0456">Lyase</keyword>
<keyword id="KW-0479">Metal-binding</keyword>
<keyword id="KW-0862">Zinc</keyword>
<reference key="1">
    <citation type="journal article" date="2002" name="Nature">
        <title>Comparison of the genomes of two Xanthomonas pathogens with differing host specificities.</title>
        <authorList>
            <person name="da Silva A.C.R."/>
            <person name="Ferro J.A."/>
            <person name="Reinach F.C."/>
            <person name="Farah C.S."/>
            <person name="Furlan L.R."/>
            <person name="Quaggio R.B."/>
            <person name="Monteiro-Vitorello C.B."/>
            <person name="Van Sluys M.A."/>
            <person name="Almeida N.F. Jr."/>
            <person name="Alves L.M.C."/>
            <person name="do Amaral A.M."/>
            <person name="Bertolini M.C."/>
            <person name="Camargo L.E.A."/>
            <person name="Camarotte G."/>
            <person name="Cannavan F."/>
            <person name="Cardozo J."/>
            <person name="Chambergo F."/>
            <person name="Ciapina L.P."/>
            <person name="Cicarelli R.M.B."/>
            <person name="Coutinho L.L."/>
            <person name="Cursino-Santos J.R."/>
            <person name="El-Dorry H."/>
            <person name="Faria J.B."/>
            <person name="Ferreira A.J.S."/>
            <person name="Ferreira R.C.C."/>
            <person name="Ferro M.I.T."/>
            <person name="Formighieri E.F."/>
            <person name="Franco M.C."/>
            <person name="Greggio C.C."/>
            <person name="Gruber A."/>
            <person name="Katsuyama A.M."/>
            <person name="Kishi L.T."/>
            <person name="Leite R.P."/>
            <person name="Lemos E.G.M."/>
            <person name="Lemos M.V.F."/>
            <person name="Locali E.C."/>
            <person name="Machado M.A."/>
            <person name="Madeira A.M.B.N."/>
            <person name="Martinez-Rossi N.M."/>
            <person name="Martins E.C."/>
            <person name="Meidanis J."/>
            <person name="Menck C.F.M."/>
            <person name="Miyaki C.Y."/>
            <person name="Moon D.H."/>
            <person name="Moreira L.M."/>
            <person name="Novo M.T.M."/>
            <person name="Okura V.K."/>
            <person name="Oliveira M.C."/>
            <person name="Oliveira V.R."/>
            <person name="Pereira H.A."/>
            <person name="Rossi A."/>
            <person name="Sena J.A.D."/>
            <person name="Silva C."/>
            <person name="de Souza R.F."/>
            <person name="Spinola L.A.F."/>
            <person name="Takita M.A."/>
            <person name="Tamura R.E."/>
            <person name="Teixeira E.C."/>
            <person name="Tezza R.I.D."/>
            <person name="Trindade dos Santos M."/>
            <person name="Truffi D."/>
            <person name="Tsai S.M."/>
            <person name="White F.F."/>
            <person name="Setubal J.C."/>
            <person name="Kitajima J.P."/>
        </authorList>
    </citation>
    <scope>NUCLEOTIDE SEQUENCE [LARGE SCALE GENOMIC DNA]</scope>
    <source>
        <strain>306</strain>
    </source>
</reference>
<proteinExistence type="inferred from homology"/>
<organism>
    <name type="scientific">Xanthomonas axonopodis pv. citri (strain 306)</name>
    <dbReference type="NCBI Taxonomy" id="190486"/>
    <lineage>
        <taxon>Bacteria</taxon>
        <taxon>Pseudomonadati</taxon>
        <taxon>Pseudomonadota</taxon>
        <taxon>Gammaproteobacteria</taxon>
        <taxon>Lysobacterales</taxon>
        <taxon>Lysobacteraceae</taxon>
        <taxon>Xanthomonas</taxon>
    </lineage>
</organism>
<evidence type="ECO:0000255" key="1">
    <source>
        <dbReference type="HAMAP-Rule" id="MF_00723"/>
    </source>
</evidence>
<evidence type="ECO:0000255" key="2">
    <source>
        <dbReference type="PROSITE-ProRule" id="PRU01239"/>
    </source>
</evidence>
<protein>
    <recommendedName>
        <fullName evidence="1">Glutathione-dependent formaldehyde-activating enzyme</fullName>
        <ecNumber evidence="1">4.4.1.22</ecNumber>
    </recommendedName>
    <alternativeName>
        <fullName evidence="1">S-(hydroxymethyl)glutathione synthase</fullName>
    </alternativeName>
</protein>